<dbReference type="EMBL" id="AE016827">
    <property type="protein sequence ID" value="AAU37921.1"/>
    <property type="molecule type" value="Genomic_DNA"/>
</dbReference>
<dbReference type="RefSeq" id="WP_011200488.1">
    <property type="nucleotide sequence ID" value="NC_006300.1"/>
</dbReference>
<dbReference type="SMR" id="Q65SY9"/>
<dbReference type="STRING" id="221988.MS1314"/>
<dbReference type="KEGG" id="msu:MS1314"/>
<dbReference type="eggNOG" id="COG0534">
    <property type="taxonomic scope" value="Bacteria"/>
</dbReference>
<dbReference type="HOGENOM" id="CLU_012893_6_0_6"/>
<dbReference type="OrthoDB" id="9780160at2"/>
<dbReference type="Proteomes" id="UP000000607">
    <property type="component" value="Chromosome"/>
</dbReference>
<dbReference type="GO" id="GO:0005886">
    <property type="term" value="C:plasma membrane"/>
    <property type="evidence" value="ECO:0007669"/>
    <property type="project" value="UniProtKB-SubCell"/>
</dbReference>
<dbReference type="GO" id="GO:0015297">
    <property type="term" value="F:antiporter activity"/>
    <property type="evidence" value="ECO:0007669"/>
    <property type="project" value="UniProtKB-KW"/>
</dbReference>
<dbReference type="GO" id="GO:0042910">
    <property type="term" value="F:xenobiotic transmembrane transporter activity"/>
    <property type="evidence" value="ECO:0007669"/>
    <property type="project" value="InterPro"/>
</dbReference>
<dbReference type="GO" id="GO:0006811">
    <property type="term" value="P:monoatomic ion transport"/>
    <property type="evidence" value="ECO:0007669"/>
    <property type="project" value="UniProtKB-KW"/>
</dbReference>
<dbReference type="CDD" id="cd13131">
    <property type="entry name" value="MATE_NorM_like"/>
    <property type="match status" value="1"/>
</dbReference>
<dbReference type="InterPro" id="IPR002528">
    <property type="entry name" value="MATE_fam"/>
</dbReference>
<dbReference type="InterPro" id="IPR050222">
    <property type="entry name" value="MATE_MdtK"/>
</dbReference>
<dbReference type="InterPro" id="IPR048279">
    <property type="entry name" value="MdtK-like"/>
</dbReference>
<dbReference type="NCBIfam" id="TIGR00797">
    <property type="entry name" value="matE"/>
    <property type="match status" value="1"/>
</dbReference>
<dbReference type="PANTHER" id="PTHR43298:SF2">
    <property type="entry name" value="FMN_FAD EXPORTER YEEO-RELATED"/>
    <property type="match status" value="1"/>
</dbReference>
<dbReference type="PANTHER" id="PTHR43298">
    <property type="entry name" value="MULTIDRUG RESISTANCE PROTEIN NORM-RELATED"/>
    <property type="match status" value="1"/>
</dbReference>
<dbReference type="Pfam" id="PF01554">
    <property type="entry name" value="MatE"/>
    <property type="match status" value="2"/>
</dbReference>
<dbReference type="PIRSF" id="PIRSF006603">
    <property type="entry name" value="DinF"/>
    <property type="match status" value="1"/>
</dbReference>
<comment type="function">
    <text evidence="1">Multidrug efflux pump.</text>
</comment>
<comment type="subcellular location">
    <subcellularLocation>
        <location evidence="1">Cell inner membrane</location>
        <topology evidence="1">Multi-pass membrane protein</topology>
    </subcellularLocation>
</comment>
<comment type="similarity">
    <text evidence="3">Belongs to the multi antimicrobial extrusion (MATE) (TC 2.A.66.1) family.</text>
</comment>
<name>NORM_MANSM</name>
<evidence type="ECO:0000250" key="1"/>
<evidence type="ECO:0000255" key="2"/>
<evidence type="ECO:0000305" key="3"/>
<gene>
    <name type="primary">norM</name>
    <name type="ordered locus">MS1314</name>
</gene>
<proteinExistence type="inferred from homology"/>
<protein>
    <recommendedName>
        <fullName>Probable multidrug resistance protein NorM</fullName>
    </recommendedName>
    <alternativeName>
        <fullName>Multidrug-efflux transporter</fullName>
    </alternativeName>
</protein>
<sequence length="465" mass="50981">MQKITHWQEYKIEAKSLILLSLPILLAQIAQNSMGLVDTIMAGRVSAADMAAISVGASIWMPLVLFGQGLLLALPPTISYLNGSAQRHRIAHQVRQGIWIILFSIVPLALLIYHSDTVINRMGMEEHLAQITIKYLHAMLFGLPAYLLLVNFRCLNDGLAKTKPAMIITLIGLLLNIPLNYIFIYGKLGVPAFGAVGCGIATTIVNWIMCILMISYTKSARNQRDLKVFENIIELPNPATLKKLFKLGLPIAIAICSEVALFALTSLLLSPLGTNAVASHQIALNTSSFIFMLPMSLGMATTILVGQSLGERSPLKAKDISYVALFIGLATATLTAFLTVVLRYQIAGIFVKDTEVISLAASLLLLNALYQFSDAVQVVVGGALRGYKDTKAILYITLFCYWVLGMPIGYILSRTDLITAHMGPTGFWIAFVVSLTVAAVLLFYRMYKIQKQSDEQLLTKLEKLK</sequence>
<reference key="1">
    <citation type="journal article" date="2004" name="Nat. Biotechnol.">
        <title>The genome sequence of the capnophilic rumen bacterium Mannheimia succiniciproducens.</title>
        <authorList>
            <person name="Hong S.H."/>
            <person name="Kim J.S."/>
            <person name="Lee S.Y."/>
            <person name="In Y.H."/>
            <person name="Choi S.S."/>
            <person name="Rih J.-K."/>
            <person name="Kim C.H."/>
            <person name="Jeong H."/>
            <person name="Hur C.G."/>
            <person name="Kim J.J."/>
        </authorList>
    </citation>
    <scope>NUCLEOTIDE SEQUENCE [LARGE SCALE GENOMIC DNA]</scope>
    <source>
        <strain>KCTC 0769BP / MBEL55E</strain>
    </source>
</reference>
<organism>
    <name type="scientific">Mannheimia succiniciproducens (strain KCTC 0769BP / MBEL55E)</name>
    <dbReference type="NCBI Taxonomy" id="221988"/>
    <lineage>
        <taxon>Bacteria</taxon>
        <taxon>Pseudomonadati</taxon>
        <taxon>Pseudomonadota</taxon>
        <taxon>Gammaproteobacteria</taxon>
        <taxon>Pasteurellales</taxon>
        <taxon>Pasteurellaceae</taxon>
        <taxon>Basfia</taxon>
    </lineage>
</organism>
<feature type="chain" id="PRO_0000164224" description="Probable multidrug resistance protein NorM">
    <location>
        <begin position="1"/>
        <end position="465"/>
    </location>
</feature>
<feature type="transmembrane region" description="Helical" evidence="2">
    <location>
        <begin position="50"/>
        <end position="72"/>
    </location>
</feature>
<feature type="transmembrane region" description="Helical" evidence="2">
    <location>
        <begin position="92"/>
        <end position="114"/>
    </location>
</feature>
<feature type="transmembrane region" description="Helical" evidence="2">
    <location>
        <begin position="127"/>
        <end position="149"/>
    </location>
</feature>
<feature type="transmembrane region" description="Helical" evidence="2">
    <location>
        <begin position="164"/>
        <end position="186"/>
    </location>
</feature>
<feature type="transmembrane region" description="Helical" evidence="2">
    <location>
        <begin position="193"/>
        <end position="215"/>
    </location>
</feature>
<feature type="transmembrane region" description="Helical" evidence="2">
    <location>
        <begin position="248"/>
        <end position="270"/>
    </location>
</feature>
<feature type="transmembrane region" description="Helical" evidence="2">
    <location>
        <begin position="283"/>
        <end position="305"/>
    </location>
</feature>
<feature type="transmembrane region" description="Helical" evidence="2">
    <location>
        <begin position="320"/>
        <end position="342"/>
    </location>
</feature>
<feature type="transmembrane region" description="Helical" evidence="2">
    <location>
        <begin position="393"/>
        <end position="412"/>
    </location>
</feature>
<feature type="transmembrane region" description="Helical" evidence="2">
    <location>
        <begin position="422"/>
        <end position="444"/>
    </location>
</feature>
<keyword id="KW-0050">Antiport</keyword>
<keyword id="KW-0997">Cell inner membrane</keyword>
<keyword id="KW-1003">Cell membrane</keyword>
<keyword id="KW-0406">Ion transport</keyword>
<keyword id="KW-0472">Membrane</keyword>
<keyword id="KW-0812">Transmembrane</keyword>
<keyword id="KW-1133">Transmembrane helix</keyword>
<keyword id="KW-0813">Transport</keyword>
<accession>Q65SY9</accession>